<gene>
    <name type="primary">SRR1</name>
    <name type="ORF">PGUG_04093</name>
</gene>
<dbReference type="EMBL" id="CH408159">
    <property type="protein sequence ID" value="EDK39995.1"/>
    <property type="molecule type" value="Genomic_DNA"/>
</dbReference>
<dbReference type="RefSeq" id="XP_001483364.1">
    <property type="nucleotide sequence ID" value="XM_001483314.1"/>
</dbReference>
<dbReference type="SMR" id="A5DLE2"/>
<dbReference type="STRING" id="294746.A5DLE2"/>
<dbReference type="GeneID" id="5125429"/>
<dbReference type="KEGG" id="pgu:PGUG_04093"/>
<dbReference type="VEuPathDB" id="FungiDB:PGUG_04093"/>
<dbReference type="eggNOG" id="ENOG502SFN6">
    <property type="taxonomic scope" value="Eukaryota"/>
</dbReference>
<dbReference type="HOGENOM" id="CLU_065405_0_0_1"/>
<dbReference type="InParanoid" id="A5DLE2"/>
<dbReference type="OMA" id="CKWATSA"/>
<dbReference type="OrthoDB" id="303614at2759"/>
<dbReference type="Proteomes" id="UP000001997">
    <property type="component" value="Unassembled WGS sequence"/>
</dbReference>
<dbReference type="GO" id="GO:0036180">
    <property type="term" value="P:filamentous growth of a population of unicellular organisms in response to biotic stimulus"/>
    <property type="evidence" value="ECO:0007669"/>
    <property type="project" value="UniProtKB-ARBA"/>
</dbReference>
<dbReference type="GO" id="GO:0000160">
    <property type="term" value="P:phosphorelay signal transduction system"/>
    <property type="evidence" value="ECO:0007669"/>
    <property type="project" value="InterPro"/>
</dbReference>
<dbReference type="GO" id="GO:1900445">
    <property type="term" value="P:positive regulation of filamentous growth of a population of unicellular organisms in response to biotic stimulus"/>
    <property type="evidence" value="ECO:0007669"/>
    <property type="project" value="UniProtKB-ARBA"/>
</dbReference>
<dbReference type="CDD" id="cd17546">
    <property type="entry name" value="REC_hyHK_CKI1_RcsC-like"/>
    <property type="match status" value="1"/>
</dbReference>
<dbReference type="Gene3D" id="3.40.50.2300">
    <property type="match status" value="1"/>
</dbReference>
<dbReference type="InterPro" id="IPR050595">
    <property type="entry name" value="Bact_response_regulator"/>
</dbReference>
<dbReference type="InterPro" id="IPR011006">
    <property type="entry name" value="CheY-like_superfamily"/>
</dbReference>
<dbReference type="InterPro" id="IPR001789">
    <property type="entry name" value="Sig_transdc_resp-reg_receiver"/>
</dbReference>
<dbReference type="PANTHER" id="PTHR44591:SF3">
    <property type="entry name" value="RESPONSE REGULATORY DOMAIN-CONTAINING PROTEIN"/>
    <property type="match status" value="1"/>
</dbReference>
<dbReference type="PANTHER" id="PTHR44591">
    <property type="entry name" value="STRESS RESPONSE REGULATOR PROTEIN 1"/>
    <property type="match status" value="1"/>
</dbReference>
<dbReference type="Pfam" id="PF00072">
    <property type="entry name" value="Response_reg"/>
    <property type="match status" value="1"/>
</dbReference>
<dbReference type="SMART" id="SM00448">
    <property type="entry name" value="REC"/>
    <property type="match status" value="1"/>
</dbReference>
<dbReference type="SUPFAM" id="SSF52172">
    <property type="entry name" value="CheY-like"/>
    <property type="match status" value="1"/>
</dbReference>
<dbReference type="PROSITE" id="PS50110">
    <property type="entry name" value="RESPONSE_REGULATORY"/>
    <property type="match status" value="1"/>
</dbReference>
<accession>A5DLE2</accession>
<sequence>MNSPDQIPFNTQLYTPPAQPITSTDYFSKKGNAPKLAVDVDLEPRTVPSFSHRHTEVTKYISPVDKLSPDVETPAEVGPANFIPNMSQYRFLLVDDNSINLKILTKILLRLYPRAHIVELCDSTSVLAYLASTPPFDCVFLDIEMPVVSGTELAYRIRQSPKLCRLPLIAVTTRTQEEDLAQYKDVGIDWTFGKPFNYPYRVVLDVVDNVLRQRINEL</sequence>
<feature type="chain" id="PRO_0000413392" description="Stress response regulator protein 1">
    <location>
        <begin position="1"/>
        <end position="218"/>
    </location>
</feature>
<feature type="domain" description="Response regulatory" evidence="2">
    <location>
        <begin position="90"/>
        <end position="209"/>
    </location>
</feature>
<feature type="modified residue" description="4-aspartylphosphate" evidence="2">
    <location>
        <position position="142"/>
    </location>
</feature>
<name>SRR1_PICGU</name>
<reference key="1">
    <citation type="journal article" date="2009" name="Nature">
        <title>Evolution of pathogenicity and sexual reproduction in eight Candida genomes.</title>
        <authorList>
            <person name="Butler G."/>
            <person name="Rasmussen M.D."/>
            <person name="Lin M.F."/>
            <person name="Santos M.A.S."/>
            <person name="Sakthikumar S."/>
            <person name="Munro C.A."/>
            <person name="Rheinbay E."/>
            <person name="Grabherr M."/>
            <person name="Forche A."/>
            <person name="Reedy J.L."/>
            <person name="Agrafioti I."/>
            <person name="Arnaud M.B."/>
            <person name="Bates S."/>
            <person name="Brown A.J.P."/>
            <person name="Brunke S."/>
            <person name="Costanzo M.C."/>
            <person name="Fitzpatrick D.A."/>
            <person name="de Groot P.W.J."/>
            <person name="Harris D."/>
            <person name="Hoyer L.L."/>
            <person name="Hube B."/>
            <person name="Klis F.M."/>
            <person name="Kodira C."/>
            <person name="Lennard N."/>
            <person name="Logue M.E."/>
            <person name="Martin R."/>
            <person name="Neiman A.M."/>
            <person name="Nikolaou E."/>
            <person name="Quail M.A."/>
            <person name="Quinn J."/>
            <person name="Santos M.C."/>
            <person name="Schmitzberger F.F."/>
            <person name="Sherlock G."/>
            <person name="Shah P."/>
            <person name="Silverstein K.A.T."/>
            <person name="Skrzypek M.S."/>
            <person name="Soll D."/>
            <person name="Staggs R."/>
            <person name="Stansfield I."/>
            <person name="Stumpf M.P.H."/>
            <person name="Sudbery P.E."/>
            <person name="Srikantha T."/>
            <person name="Zeng Q."/>
            <person name="Berman J."/>
            <person name="Berriman M."/>
            <person name="Heitman J."/>
            <person name="Gow N.A.R."/>
            <person name="Lorenz M.C."/>
            <person name="Birren B.W."/>
            <person name="Kellis M."/>
            <person name="Cuomo C.A."/>
        </authorList>
    </citation>
    <scope>NUCLEOTIDE SEQUENCE [LARGE SCALE GENOMIC DNA]</scope>
    <source>
        <strain>ATCC 6260 / CBS 566 / DSM 6381 / JCM 1539 / NBRC 10279 / NRRL Y-324</strain>
    </source>
</reference>
<evidence type="ECO:0000250" key="1"/>
<evidence type="ECO:0000255" key="2">
    <source>
        <dbReference type="PROSITE-ProRule" id="PRU00169"/>
    </source>
</evidence>
<organism>
    <name type="scientific">Meyerozyma guilliermondii (strain ATCC 6260 / CBS 566 / DSM 6381 / JCM 1539 / NBRC 10279 / NRRL Y-324)</name>
    <name type="common">Yeast</name>
    <name type="synonym">Candida guilliermondii</name>
    <dbReference type="NCBI Taxonomy" id="294746"/>
    <lineage>
        <taxon>Eukaryota</taxon>
        <taxon>Fungi</taxon>
        <taxon>Dikarya</taxon>
        <taxon>Ascomycota</taxon>
        <taxon>Saccharomycotina</taxon>
        <taxon>Pichiomycetes</taxon>
        <taxon>Debaryomycetaceae</taxon>
        <taxon>Meyerozyma</taxon>
    </lineage>
</organism>
<proteinExistence type="inferred from homology"/>
<comment type="function">
    <text evidence="1">Required for stress adaptation, morphogenesis and virulence.</text>
</comment>
<protein>
    <recommendedName>
        <fullName>Stress response regulator protein 1</fullName>
    </recommendedName>
</protein>
<keyword id="KW-0597">Phosphoprotein</keyword>
<keyword id="KW-1185">Reference proteome</keyword>